<comment type="function">
    <text evidence="1">Together with its co-chaperonin GroES, plays an essential role in assisting protein folding. The GroEL-GroES system forms a nano-cage that allows encapsulation of the non-native substrate proteins and provides a physical environment optimized to promote and accelerate protein folding.</text>
</comment>
<comment type="catalytic activity">
    <reaction evidence="1">
        <text>ATP + H2O + a folded polypeptide = ADP + phosphate + an unfolded polypeptide.</text>
        <dbReference type="EC" id="5.6.1.7"/>
    </reaction>
</comment>
<comment type="subunit">
    <text evidence="1">Forms a cylinder of 14 subunits composed of two heptameric rings stacked back-to-back. Interacts with the co-chaperonin GroES.</text>
</comment>
<comment type="subcellular location">
    <subcellularLocation>
        <location evidence="1">Cytoplasm</location>
    </subcellularLocation>
</comment>
<comment type="similarity">
    <text evidence="1">Belongs to the chaperonin (HSP60) family.</text>
</comment>
<accession>A5EG60</accession>
<sequence>MAAKDVKFSTDARDRMLRGVDILANAVKVTLGPKGRNVVIEKSFGAPRITKDGVTVAKEIELEDKFENMGAQMVREVASKTADLAGDGTTTATVLAQAIVKEGAKSVAAGMNPMDLKRGIDLAVDAIVADLKAHAKKITSNDEIAQVGTISANGDNEIGRFLAEAMQKVGNEGVITVEEAKSLDTELEVVEGMQFDRGYVSPYFVTNSEKMRVELEDPYILIHEKKLSGLQTMLPLLEAVVQSGKPLLIVAEDVEGEALATLVVNKLRGGLKIAAVKAPGFGDRRKAMLEDIAILTGGTTISEDLGIKLENVTLSMLGRAKKVVIDKENTTIVDGAGAKKDIEARTQQIKLQIEETTSDYDREKLQERLAKLAGGVAVIRVGGATEVEVKERKDRVDDALHATRAAVEEGILPGGGVALLRATKVLDGVKTANADQKAGVDIIRRAIQVPVRQIVQNAGEDGSLVVGKLLEKDTYSWGFNAATGEYQDLVQAGVIDPAKVVRTALQDAASVASLLITTEALVADKPKKAEATQAAPAMDF</sequence>
<proteinExistence type="inferred from homology"/>
<dbReference type="EC" id="5.6.1.7" evidence="1"/>
<dbReference type="EMBL" id="CP000494">
    <property type="protein sequence ID" value="ABQ35154.1"/>
    <property type="molecule type" value="Genomic_DNA"/>
</dbReference>
<dbReference type="RefSeq" id="WP_012043174.1">
    <property type="nucleotide sequence ID" value="NC_009485.1"/>
</dbReference>
<dbReference type="SMR" id="A5EG60"/>
<dbReference type="STRING" id="288000.BBta_3034"/>
<dbReference type="KEGG" id="bbt:BBta_3034"/>
<dbReference type="eggNOG" id="COG0459">
    <property type="taxonomic scope" value="Bacteria"/>
</dbReference>
<dbReference type="HOGENOM" id="CLU_016503_3_0_5"/>
<dbReference type="OrthoDB" id="9766614at2"/>
<dbReference type="Proteomes" id="UP000000246">
    <property type="component" value="Chromosome"/>
</dbReference>
<dbReference type="GO" id="GO:0005737">
    <property type="term" value="C:cytoplasm"/>
    <property type="evidence" value="ECO:0007669"/>
    <property type="project" value="UniProtKB-SubCell"/>
</dbReference>
<dbReference type="GO" id="GO:0005524">
    <property type="term" value="F:ATP binding"/>
    <property type="evidence" value="ECO:0007669"/>
    <property type="project" value="UniProtKB-UniRule"/>
</dbReference>
<dbReference type="GO" id="GO:0140662">
    <property type="term" value="F:ATP-dependent protein folding chaperone"/>
    <property type="evidence" value="ECO:0007669"/>
    <property type="project" value="InterPro"/>
</dbReference>
<dbReference type="GO" id="GO:0016853">
    <property type="term" value="F:isomerase activity"/>
    <property type="evidence" value="ECO:0007669"/>
    <property type="project" value="UniProtKB-KW"/>
</dbReference>
<dbReference type="GO" id="GO:0051082">
    <property type="term" value="F:unfolded protein binding"/>
    <property type="evidence" value="ECO:0007669"/>
    <property type="project" value="UniProtKB-UniRule"/>
</dbReference>
<dbReference type="GO" id="GO:0042026">
    <property type="term" value="P:protein refolding"/>
    <property type="evidence" value="ECO:0007669"/>
    <property type="project" value="UniProtKB-UniRule"/>
</dbReference>
<dbReference type="CDD" id="cd03344">
    <property type="entry name" value="GroEL"/>
    <property type="match status" value="1"/>
</dbReference>
<dbReference type="FunFam" id="1.10.560.10:FF:000001">
    <property type="entry name" value="60 kDa chaperonin"/>
    <property type="match status" value="1"/>
</dbReference>
<dbReference type="FunFam" id="3.50.7.10:FF:000001">
    <property type="entry name" value="60 kDa chaperonin"/>
    <property type="match status" value="1"/>
</dbReference>
<dbReference type="Gene3D" id="3.50.7.10">
    <property type="entry name" value="GroEL"/>
    <property type="match status" value="1"/>
</dbReference>
<dbReference type="Gene3D" id="1.10.560.10">
    <property type="entry name" value="GroEL-like equatorial domain"/>
    <property type="match status" value="1"/>
</dbReference>
<dbReference type="Gene3D" id="3.30.260.10">
    <property type="entry name" value="TCP-1-like chaperonin intermediate domain"/>
    <property type="match status" value="1"/>
</dbReference>
<dbReference type="HAMAP" id="MF_00600">
    <property type="entry name" value="CH60"/>
    <property type="match status" value="1"/>
</dbReference>
<dbReference type="InterPro" id="IPR018370">
    <property type="entry name" value="Chaperonin_Cpn60_CS"/>
</dbReference>
<dbReference type="InterPro" id="IPR001844">
    <property type="entry name" value="Cpn60/GroEL"/>
</dbReference>
<dbReference type="InterPro" id="IPR002423">
    <property type="entry name" value="Cpn60/GroEL/TCP-1"/>
</dbReference>
<dbReference type="InterPro" id="IPR027409">
    <property type="entry name" value="GroEL-like_apical_dom_sf"/>
</dbReference>
<dbReference type="InterPro" id="IPR027413">
    <property type="entry name" value="GROEL-like_equatorial_sf"/>
</dbReference>
<dbReference type="InterPro" id="IPR027410">
    <property type="entry name" value="TCP-1-like_intermed_sf"/>
</dbReference>
<dbReference type="NCBIfam" id="TIGR02348">
    <property type="entry name" value="GroEL"/>
    <property type="match status" value="1"/>
</dbReference>
<dbReference type="NCBIfam" id="NF000592">
    <property type="entry name" value="PRK00013.1"/>
    <property type="match status" value="1"/>
</dbReference>
<dbReference type="NCBIfam" id="NF009487">
    <property type="entry name" value="PRK12849.1"/>
    <property type="match status" value="1"/>
</dbReference>
<dbReference type="NCBIfam" id="NF009488">
    <property type="entry name" value="PRK12850.1"/>
    <property type="match status" value="1"/>
</dbReference>
<dbReference type="NCBIfam" id="NF009489">
    <property type="entry name" value="PRK12851.1"/>
    <property type="match status" value="1"/>
</dbReference>
<dbReference type="PANTHER" id="PTHR45633">
    <property type="entry name" value="60 KDA HEAT SHOCK PROTEIN, MITOCHONDRIAL"/>
    <property type="match status" value="1"/>
</dbReference>
<dbReference type="Pfam" id="PF00118">
    <property type="entry name" value="Cpn60_TCP1"/>
    <property type="match status" value="1"/>
</dbReference>
<dbReference type="PRINTS" id="PR00298">
    <property type="entry name" value="CHAPERONIN60"/>
</dbReference>
<dbReference type="SUPFAM" id="SSF52029">
    <property type="entry name" value="GroEL apical domain-like"/>
    <property type="match status" value="1"/>
</dbReference>
<dbReference type="SUPFAM" id="SSF48592">
    <property type="entry name" value="GroEL equatorial domain-like"/>
    <property type="match status" value="1"/>
</dbReference>
<dbReference type="SUPFAM" id="SSF54849">
    <property type="entry name" value="GroEL-intermediate domain like"/>
    <property type="match status" value="1"/>
</dbReference>
<dbReference type="PROSITE" id="PS00296">
    <property type="entry name" value="CHAPERONINS_CPN60"/>
    <property type="match status" value="1"/>
</dbReference>
<organism>
    <name type="scientific">Bradyrhizobium sp. (strain BTAi1 / ATCC BAA-1182)</name>
    <dbReference type="NCBI Taxonomy" id="288000"/>
    <lineage>
        <taxon>Bacteria</taxon>
        <taxon>Pseudomonadati</taxon>
        <taxon>Pseudomonadota</taxon>
        <taxon>Alphaproteobacteria</taxon>
        <taxon>Hyphomicrobiales</taxon>
        <taxon>Nitrobacteraceae</taxon>
        <taxon>Bradyrhizobium</taxon>
    </lineage>
</organism>
<reference key="1">
    <citation type="journal article" date="2007" name="Science">
        <title>Legumes symbioses: absence of nod genes in photosynthetic bradyrhizobia.</title>
        <authorList>
            <person name="Giraud E."/>
            <person name="Moulin L."/>
            <person name="Vallenet D."/>
            <person name="Barbe V."/>
            <person name="Cytryn E."/>
            <person name="Avarre J.-C."/>
            <person name="Jaubert M."/>
            <person name="Simon D."/>
            <person name="Cartieaux F."/>
            <person name="Prin Y."/>
            <person name="Bena G."/>
            <person name="Hannibal L."/>
            <person name="Fardoux J."/>
            <person name="Kojadinovic M."/>
            <person name="Vuillet L."/>
            <person name="Lajus A."/>
            <person name="Cruveiller S."/>
            <person name="Rouy Z."/>
            <person name="Mangenot S."/>
            <person name="Segurens B."/>
            <person name="Dossat C."/>
            <person name="Franck W.L."/>
            <person name="Chang W.-S."/>
            <person name="Saunders E."/>
            <person name="Bruce D."/>
            <person name="Richardson P."/>
            <person name="Normand P."/>
            <person name="Dreyfus B."/>
            <person name="Pignol D."/>
            <person name="Stacey G."/>
            <person name="Emerich D."/>
            <person name="Vermeglio A."/>
            <person name="Medigue C."/>
            <person name="Sadowsky M."/>
        </authorList>
    </citation>
    <scope>NUCLEOTIDE SEQUENCE [LARGE SCALE GENOMIC DNA]</scope>
    <source>
        <strain>BTAi1 / ATCC BAA-1182</strain>
    </source>
</reference>
<keyword id="KW-0067">ATP-binding</keyword>
<keyword id="KW-0143">Chaperone</keyword>
<keyword id="KW-0963">Cytoplasm</keyword>
<keyword id="KW-0413">Isomerase</keyword>
<keyword id="KW-0547">Nucleotide-binding</keyword>
<keyword id="KW-1185">Reference proteome</keyword>
<protein>
    <recommendedName>
        <fullName evidence="1">Chaperonin GroEL 3</fullName>
        <ecNumber evidence="1">5.6.1.7</ecNumber>
    </recommendedName>
    <alternativeName>
        <fullName evidence="1">60 kDa chaperonin 3</fullName>
    </alternativeName>
    <alternativeName>
        <fullName evidence="1">Chaperonin-60 3</fullName>
        <shortName evidence="1">Cpn60 3</shortName>
    </alternativeName>
</protein>
<gene>
    <name evidence="1" type="primary">groEL3</name>
    <name evidence="1" type="synonym">groL3</name>
    <name type="ordered locus">BBta_3034</name>
</gene>
<feature type="chain" id="PRO_0000331976" description="Chaperonin GroEL 3">
    <location>
        <begin position="1"/>
        <end position="540"/>
    </location>
</feature>
<feature type="binding site" evidence="1">
    <location>
        <begin position="30"/>
        <end position="33"/>
    </location>
    <ligand>
        <name>ATP</name>
        <dbReference type="ChEBI" id="CHEBI:30616"/>
    </ligand>
</feature>
<feature type="binding site" evidence="1">
    <location>
        <position position="51"/>
    </location>
    <ligand>
        <name>ATP</name>
        <dbReference type="ChEBI" id="CHEBI:30616"/>
    </ligand>
</feature>
<feature type="binding site" evidence="1">
    <location>
        <begin position="87"/>
        <end position="91"/>
    </location>
    <ligand>
        <name>ATP</name>
        <dbReference type="ChEBI" id="CHEBI:30616"/>
    </ligand>
</feature>
<feature type="binding site" evidence="1">
    <location>
        <position position="415"/>
    </location>
    <ligand>
        <name>ATP</name>
        <dbReference type="ChEBI" id="CHEBI:30616"/>
    </ligand>
</feature>
<feature type="binding site" evidence="1">
    <location>
        <begin position="480"/>
        <end position="482"/>
    </location>
    <ligand>
        <name>ATP</name>
        <dbReference type="ChEBI" id="CHEBI:30616"/>
    </ligand>
</feature>
<feature type="binding site" evidence="1">
    <location>
        <position position="496"/>
    </location>
    <ligand>
        <name>ATP</name>
        <dbReference type="ChEBI" id="CHEBI:30616"/>
    </ligand>
</feature>
<evidence type="ECO:0000255" key="1">
    <source>
        <dbReference type="HAMAP-Rule" id="MF_00600"/>
    </source>
</evidence>
<name>CH603_BRASB</name>